<proteinExistence type="inferred from homology"/>
<name>RRF_MYCTO</name>
<accession>P9WGY0</accession>
<accession>L0TCI6</accession>
<accession>P66734</accession>
<accession>Q10794</accession>
<gene>
    <name evidence="1" type="primary">frr</name>
    <name type="ordered locus">MT2949</name>
</gene>
<protein>
    <recommendedName>
        <fullName evidence="1">Ribosome-recycling factor</fullName>
        <shortName evidence="1">RRF</shortName>
    </recommendedName>
    <alternativeName>
        <fullName evidence="1">Ribosome-releasing factor</fullName>
    </alternativeName>
</protein>
<dbReference type="EMBL" id="AE000516">
    <property type="protein sequence ID" value="AAK47274.1"/>
    <property type="molecule type" value="Genomic_DNA"/>
</dbReference>
<dbReference type="PIR" id="E70924">
    <property type="entry name" value="E70924"/>
</dbReference>
<dbReference type="RefSeq" id="WP_003414663.1">
    <property type="nucleotide sequence ID" value="NZ_KK341227.1"/>
</dbReference>
<dbReference type="SMR" id="P9WGY0"/>
<dbReference type="GeneID" id="45426870"/>
<dbReference type="KEGG" id="mtc:MT2949"/>
<dbReference type="PATRIC" id="fig|83331.31.peg.3186"/>
<dbReference type="HOGENOM" id="CLU_073981_2_0_11"/>
<dbReference type="Proteomes" id="UP000001020">
    <property type="component" value="Chromosome"/>
</dbReference>
<dbReference type="GO" id="GO:0005737">
    <property type="term" value="C:cytoplasm"/>
    <property type="evidence" value="ECO:0007669"/>
    <property type="project" value="UniProtKB-SubCell"/>
</dbReference>
<dbReference type="GO" id="GO:0043023">
    <property type="term" value="F:ribosomal large subunit binding"/>
    <property type="evidence" value="ECO:0007669"/>
    <property type="project" value="TreeGrafter"/>
</dbReference>
<dbReference type="GO" id="GO:0006415">
    <property type="term" value="P:translational termination"/>
    <property type="evidence" value="ECO:0007669"/>
    <property type="project" value="UniProtKB-UniRule"/>
</dbReference>
<dbReference type="CDD" id="cd00520">
    <property type="entry name" value="RRF"/>
    <property type="match status" value="1"/>
</dbReference>
<dbReference type="FunFam" id="1.10.132.20:FF:000001">
    <property type="entry name" value="Ribosome-recycling factor"/>
    <property type="match status" value="1"/>
</dbReference>
<dbReference type="FunFam" id="3.30.1360.40:FF:000001">
    <property type="entry name" value="Ribosome-recycling factor"/>
    <property type="match status" value="1"/>
</dbReference>
<dbReference type="Gene3D" id="3.30.1360.40">
    <property type="match status" value="1"/>
</dbReference>
<dbReference type="Gene3D" id="1.10.132.20">
    <property type="entry name" value="Ribosome-recycling factor"/>
    <property type="match status" value="1"/>
</dbReference>
<dbReference type="HAMAP" id="MF_00040">
    <property type="entry name" value="RRF"/>
    <property type="match status" value="1"/>
</dbReference>
<dbReference type="InterPro" id="IPR002661">
    <property type="entry name" value="Ribosome_recyc_fac"/>
</dbReference>
<dbReference type="InterPro" id="IPR023584">
    <property type="entry name" value="Ribosome_recyc_fac_dom"/>
</dbReference>
<dbReference type="InterPro" id="IPR036191">
    <property type="entry name" value="RRF_sf"/>
</dbReference>
<dbReference type="NCBIfam" id="TIGR00496">
    <property type="entry name" value="frr"/>
    <property type="match status" value="1"/>
</dbReference>
<dbReference type="PANTHER" id="PTHR20982:SF3">
    <property type="entry name" value="MITOCHONDRIAL RIBOSOME RECYCLING FACTOR PSEUDO 1"/>
    <property type="match status" value="1"/>
</dbReference>
<dbReference type="PANTHER" id="PTHR20982">
    <property type="entry name" value="RIBOSOME RECYCLING FACTOR"/>
    <property type="match status" value="1"/>
</dbReference>
<dbReference type="Pfam" id="PF01765">
    <property type="entry name" value="RRF"/>
    <property type="match status" value="1"/>
</dbReference>
<dbReference type="SUPFAM" id="SSF55194">
    <property type="entry name" value="Ribosome recycling factor, RRF"/>
    <property type="match status" value="1"/>
</dbReference>
<reference key="1">
    <citation type="journal article" date="2002" name="J. Bacteriol.">
        <title>Whole-genome comparison of Mycobacterium tuberculosis clinical and laboratory strains.</title>
        <authorList>
            <person name="Fleischmann R.D."/>
            <person name="Alland D."/>
            <person name="Eisen J.A."/>
            <person name="Carpenter L."/>
            <person name="White O."/>
            <person name="Peterson J.D."/>
            <person name="DeBoy R.T."/>
            <person name="Dodson R.J."/>
            <person name="Gwinn M.L."/>
            <person name="Haft D.H."/>
            <person name="Hickey E.K."/>
            <person name="Kolonay J.F."/>
            <person name="Nelson W.C."/>
            <person name="Umayam L.A."/>
            <person name="Ermolaeva M.D."/>
            <person name="Salzberg S.L."/>
            <person name="Delcher A."/>
            <person name="Utterback T.R."/>
            <person name="Weidman J.F."/>
            <person name="Khouri H.M."/>
            <person name="Gill J."/>
            <person name="Mikula A."/>
            <person name="Bishai W."/>
            <person name="Jacobs W.R. Jr."/>
            <person name="Venter J.C."/>
            <person name="Fraser C.M."/>
        </authorList>
    </citation>
    <scope>NUCLEOTIDE SEQUENCE [LARGE SCALE GENOMIC DNA]</scope>
    <source>
        <strain>CDC 1551 / Oshkosh</strain>
    </source>
</reference>
<sequence length="185" mass="20828">MIDEALFDAEEKMEKAVAVARDDLSTIRTGRANPGMFSRITIDYYGAATPITQLASINVPEARLVVIKPYEANQLRAIETAIRNSDLGVNPTNDGALIRVAVPQLTEERRRELVKQAKHKGEEAKVSVRNIRRKAMEELHRIRKEGEAGEDEVGRAEKDLDKTTHQYVTQIDELVKHKEGELLEV</sequence>
<organism>
    <name type="scientific">Mycobacterium tuberculosis (strain CDC 1551 / Oshkosh)</name>
    <dbReference type="NCBI Taxonomy" id="83331"/>
    <lineage>
        <taxon>Bacteria</taxon>
        <taxon>Bacillati</taxon>
        <taxon>Actinomycetota</taxon>
        <taxon>Actinomycetes</taxon>
        <taxon>Mycobacteriales</taxon>
        <taxon>Mycobacteriaceae</taxon>
        <taxon>Mycobacterium</taxon>
        <taxon>Mycobacterium tuberculosis complex</taxon>
    </lineage>
</organism>
<comment type="function">
    <text evidence="1">Responsible for the release of ribosomes from messenger RNA at the termination of protein biosynthesis. May increase the efficiency of translation by recycling ribosomes from one round of translation to another.</text>
</comment>
<comment type="subcellular location">
    <subcellularLocation>
        <location evidence="1">Cytoplasm</location>
    </subcellularLocation>
</comment>
<comment type="similarity">
    <text evidence="1">Belongs to the RRF family.</text>
</comment>
<evidence type="ECO:0000255" key="1">
    <source>
        <dbReference type="HAMAP-Rule" id="MF_00040"/>
    </source>
</evidence>
<evidence type="ECO:0000256" key="2">
    <source>
        <dbReference type="SAM" id="MobiDB-lite"/>
    </source>
</evidence>
<keyword id="KW-0963">Cytoplasm</keyword>
<keyword id="KW-0648">Protein biosynthesis</keyword>
<keyword id="KW-1185">Reference proteome</keyword>
<feature type="chain" id="PRO_0000428283" description="Ribosome-recycling factor">
    <location>
        <begin position="1"/>
        <end position="185"/>
    </location>
</feature>
<feature type="region of interest" description="Disordered" evidence="2">
    <location>
        <begin position="144"/>
        <end position="164"/>
    </location>
</feature>